<accession>B1VSH7</accession>
<proteinExistence type="inferred from homology"/>
<protein>
    <recommendedName>
        <fullName evidence="1">NADH-quinone oxidoreductase subunit D 2</fullName>
        <ecNumber evidence="1">7.1.1.-</ecNumber>
    </recommendedName>
    <alternativeName>
        <fullName evidence="1">NADH dehydrogenase I subunit D 2</fullName>
    </alternativeName>
    <alternativeName>
        <fullName evidence="1">NDH-1 subunit D 2</fullName>
    </alternativeName>
</protein>
<reference key="1">
    <citation type="journal article" date="2008" name="J. Bacteriol.">
        <title>Genome sequence of the streptomycin-producing microorganism Streptomyces griseus IFO 13350.</title>
        <authorList>
            <person name="Ohnishi Y."/>
            <person name="Ishikawa J."/>
            <person name="Hara H."/>
            <person name="Suzuki H."/>
            <person name="Ikenoya M."/>
            <person name="Ikeda H."/>
            <person name="Yamashita A."/>
            <person name="Hattori M."/>
            <person name="Horinouchi S."/>
        </authorList>
    </citation>
    <scope>NUCLEOTIDE SEQUENCE [LARGE SCALE GENOMIC DNA]</scope>
    <source>
        <strain>JCM 4626 / CBS 651.72 / NBRC 13350 / KCC S-0626 / ISP 5235</strain>
    </source>
</reference>
<name>NUOD2_STRGG</name>
<evidence type="ECO:0000255" key="1">
    <source>
        <dbReference type="HAMAP-Rule" id="MF_01358"/>
    </source>
</evidence>
<feature type="chain" id="PRO_0000357942" description="NADH-quinone oxidoreductase subunit D 2">
    <location>
        <begin position="1"/>
        <end position="394"/>
    </location>
</feature>
<gene>
    <name evidence="1" type="primary">nuoD2</name>
    <name type="ordered locus">SGR_4102</name>
</gene>
<organism>
    <name type="scientific">Streptomyces griseus subsp. griseus (strain JCM 4626 / CBS 651.72 / NBRC 13350 / KCC S-0626 / ISP 5235)</name>
    <dbReference type="NCBI Taxonomy" id="455632"/>
    <lineage>
        <taxon>Bacteria</taxon>
        <taxon>Bacillati</taxon>
        <taxon>Actinomycetota</taxon>
        <taxon>Actinomycetes</taxon>
        <taxon>Kitasatosporales</taxon>
        <taxon>Streptomycetaceae</taxon>
        <taxon>Streptomyces</taxon>
    </lineage>
</organism>
<dbReference type="EC" id="7.1.1.-" evidence="1"/>
<dbReference type="EMBL" id="AP009493">
    <property type="protein sequence ID" value="BAG20931.1"/>
    <property type="molecule type" value="Genomic_DNA"/>
</dbReference>
<dbReference type="SMR" id="B1VSH7"/>
<dbReference type="KEGG" id="sgr:SGR_4102"/>
<dbReference type="eggNOG" id="COG0649">
    <property type="taxonomic scope" value="Bacteria"/>
</dbReference>
<dbReference type="HOGENOM" id="CLU_015134_1_2_11"/>
<dbReference type="Proteomes" id="UP000001685">
    <property type="component" value="Chromosome"/>
</dbReference>
<dbReference type="GO" id="GO:0005886">
    <property type="term" value="C:plasma membrane"/>
    <property type="evidence" value="ECO:0007669"/>
    <property type="project" value="UniProtKB-SubCell"/>
</dbReference>
<dbReference type="GO" id="GO:0051287">
    <property type="term" value="F:NAD binding"/>
    <property type="evidence" value="ECO:0007669"/>
    <property type="project" value="InterPro"/>
</dbReference>
<dbReference type="GO" id="GO:0050136">
    <property type="term" value="F:NADH:ubiquinone reductase (non-electrogenic) activity"/>
    <property type="evidence" value="ECO:0007669"/>
    <property type="project" value="UniProtKB-UniRule"/>
</dbReference>
<dbReference type="GO" id="GO:0048038">
    <property type="term" value="F:quinone binding"/>
    <property type="evidence" value="ECO:0007669"/>
    <property type="project" value="UniProtKB-KW"/>
</dbReference>
<dbReference type="Gene3D" id="1.10.645.10">
    <property type="entry name" value="Cytochrome-c3 Hydrogenase, chain B"/>
    <property type="match status" value="1"/>
</dbReference>
<dbReference type="HAMAP" id="MF_01358">
    <property type="entry name" value="NDH1_NuoD"/>
    <property type="match status" value="1"/>
</dbReference>
<dbReference type="InterPro" id="IPR001135">
    <property type="entry name" value="NADH_Q_OxRdtase_suD"/>
</dbReference>
<dbReference type="InterPro" id="IPR014029">
    <property type="entry name" value="NADH_UbQ_OxRdtase_49kDa_CS"/>
</dbReference>
<dbReference type="InterPro" id="IPR022885">
    <property type="entry name" value="NDH1_su_D/H"/>
</dbReference>
<dbReference type="InterPro" id="IPR029014">
    <property type="entry name" value="NiFe-Hase_large"/>
</dbReference>
<dbReference type="PANTHER" id="PTHR11993:SF10">
    <property type="entry name" value="NADH DEHYDROGENASE [UBIQUINONE] IRON-SULFUR PROTEIN 2, MITOCHONDRIAL"/>
    <property type="match status" value="1"/>
</dbReference>
<dbReference type="PANTHER" id="PTHR11993">
    <property type="entry name" value="NADH-UBIQUINONE OXIDOREDUCTASE 49 KDA SUBUNIT"/>
    <property type="match status" value="1"/>
</dbReference>
<dbReference type="Pfam" id="PF00346">
    <property type="entry name" value="Complex1_49kDa"/>
    <property type="match status" value="2"/>
</dbReference>
<dbReference type="SUPFAM" id="SSF56762">
    <property type="entry name" value="HydB/Nqo4-like"/>
    <property type="match status" value="1"/>
</dbReference>
<dbReference type="PROSITE" id="PS00535">
    <property type="entry name" value="COMPLEX1_49K"/>
    <property type="match status" value="1"/>
</dbReference>
<sequence length="394" mass="43554">MTPAADPGQGILSRMTETTIGIGGAAESTDMVLNIGPQHPSTHGVLRLRIVLDGERVQHAEPVIGYMHRGAEKLFEARDYRQIIMLANRHDWLSAFSNELGVVMAVERMLGMEVPERAVWTRTLLAELNRVLNHLMFLGSYPLELGGITPVFHAFREREELQAVMEEVSGGRMHYMFNRVGGLKEDVPAGWAGRVRDAVASVRSRMDVYENLVLGNEIFRGRTRDVGVLSAAAVHAYGVSGPIARASGVDFDLRRDEPYLAYGELRDTLKVVTRTEGDCLARFECLLEQTLNSLDLADACLDRMAHLAPGPINQRLPKVLKAPEGHTYAWTENPLGVNGYYLVSKGEKTPYRLKLRSASFNNIQALTELLPGTLVADMVAILGSLFFVVGDIDK</sequence>
<comment type="function">
    <text evidence="1">NDH-1 shuttles electrons from NADH, via FMN and iron-sulfur (Fe-S) centers, to quinones in the respiratory chain. The immediate electron acceptor for the enzyme in this species is believed to be a menaquinone. Couples the redox reaction to proton translocation (for every two electrons transferred, four hydrogen ions are translocated across the cytoplasmic membrane), and thus conserves the redox energy in a proton gradient.</text>
</comment>
<comment type="catalytic activity">
    <reaction evidence="1">
        <text>a quinone + NADH + 5 H(+)(in) = a quinol + NAD(+) + 4 H(+)(out)</text>
        <dbReference type="Rhea" id="RHEA:57888"/>
        <dbReference type="ChEBI" id="CHEBI:15378"/>
        <dbReference type="ChEBI" id="CHEBI:24646"/>
        <dbReference type="ChEBI" id="CHEBI:57540"/>
        <dbReference type="ChEBI" id="CHEBI:57945"/>
        <dbReference type="ChEBI" id="CHEBI:132124"/>
    </reaction>
</comment>
<comment type="subunit">
    <text evidence="1">NDH-1 is composed of 14 different subunits. Subunits NuoB, C, D, E, F, and G constitute the peripheral sector of the complex.</text>
</comment>
<comment type="subcellular location">
    <subcellularLocation>
        <location evidence="1">Cell membrane</location>
        <topology evidence="1">Peripheral membrane protein</topology>
        <orientation evidence="1">Cytoplasmic side</orientation>
    </subcellularLocation>
</comment>
<comment type="similarity">
    <text evidence="1">Belongs to the complex I 49 kDa subunit family.</text>
</comment>
<keyword id="KW-1003">Cell membrane</keyword>
<keyword id="KW-0472">Membrane</keyword>
<keyword id="KW-0520">NAD</keyword>
<keyword id="KW-0874">Quinone</keyword>
<keyword id="KW-1278">Translocase</keyword>
<keyword id="KW-0813">Transport</keyword>